<sequence>MQILLANPRGFCAGVDRAISIVENALAIYGAPIYVRHEVVHNRYVVDSLRERGAIFIEQISEVPDGAILIFSAHGVSQAVRNEAKSRDLTVFDATCPLVTKVHMEVARASRRGEESILIGHAGHPEVEGTMGQYSNPEGGMYLVESPDDVWKLTVKNEEKLSFMTQTTLSVDDTSDVIDALRKRFPKIVGPRKDDICYATTNRQEAVRALAEQAEVVLVVGSKNSSNSNRLAELAQRMGKRAFLIDDATDIQEEWVKEAKCVGVTAGASAPDILVQNVVARLQQLGGGEAIPLEGREENIVFEVPKELRVDIREVD</sequence>
<comment type="function">
    <text evidence="1">Catalyzes the conversion of 1-hydroxy-2-methyl-2-(E)-butenyl 4-diphosphate (HMBPP) into a mixture of isopentenyl diphosphate (IPP) and dimethylallyl diphosphate (DMAPP). Acts in the terminal step of the DOXP/MEP pathway for isoprenoid precursor biosynthesis.</text>
</comment>
<comment type="catalytic activity">
    <reaction evidence="1">
        <text>isopentenyl diphosphate + 2 oxidized [2Fe-2S]-[ferredoxin] + H2O = (2E)-4-hydroxy-3-methylbut-2-enyl diphosphate + 2 reduced [2Fe-2S]-[ferredoxin] + 2 H(+)</text>
        <dbReference type="Rhea" id="RHEA:24488"/>
        <dbReference type="Rhea" id="RHEA-COMP:10000"/>
        <dbReference type="Rhea" id="RHEA-COMP:10001"/>
        <dbReference type="ChEBI" id="CHEBI:15377"/>
        <dbReference type="ChEBI" id="CHEBI:15378"/>
        <dbReference type="ChEBI" id="CHEBI:33737"/>
        <dbReference type="ChEBI" id="CHEBI:33738"/>
        <dbReference type="ChEBI" id="CHEBI:128753"/>
        <dbReference type="ChEBI" id="CHEBI:128769"/>
        <dbReference type="EC" id="1.17.7.4"/>
    </reaction>
</comment>
<comment type="catalytic activity">
    <reaction evidence="1">
        <text>dimethylallyl diphosphate + 2 oxidized [2Fe-2S]-[ferredoxin] + H2O = (2E)-4-hydroxy-3-methylbut-2-enyl diphosphate + 2 reduced [2Fe-2S]-[ferredoxin] + 2 H(+)</text>
        <dbReference type="Rhea" id="RHEA:24825"/>
        <dbReference type="Rhea" id="RHEA-COMP:10000"/>
        <dbReference type="Rhea" id="RHEA-COMP:10001"/>
        <dbReference type="ChEBI" id="CHEBI:15377"/>
        <dbReference type="ChEBI" id="CHEBI:15378"/>
        <dbReference type="ChEBI" id="CHEBI:33737"/>
        <dbReference type="ChEBI" id="CHEBI:33738"/>
        <dbReference type="ChEBI" id="CHEBI:57623"/>
        <dbReference type="ChEBI" id="CHEBI:128753"/>
        <dbReference type="EC" id="1.17.7.4"/>
    </reaction>
</comment>
<comment type="cofactor">
    <cofactor evidence="1">
        <name>[4Fe-4S] cluster</name>
        <dbReference type="ChEBI" id="CHEBI:49883"/>
    </cofactor>
    <text evidence="1">Binds 1 [4Fe-4S] cluster per subunit.</text>
</comment>
<comment type="pathway">
    <text evidence="1">Isoprenoid biosynthesis; dimethylallyl diphosphate biosynthesis; dimethylallyl diphosphate from (2E)-4-hydroxy-3-methylbutenyl diphosphate: step 1/1.</text>
</comment>
<comment type="pathway">
    <text evidence="1">Isoprenoid biosynthesis; isopentenyl diphosphate biosynthesis via DXP pathway; isopentenyl diphosphate from 1-deoxy-D-xylulose 5-phosphate: step 6/6.</text>
</comment>
<comment type="subunit">
    <text evidence="1">Homodimer.</text>
</comment>
<comment type="similarity">
    <text evidence="1">Belongs to the IspH family.</text>
</comment>
<evidence type="ECO:0000255" key="1">
    <source>
        <dbReference type="HAMAP-Rule" id="MF_00191"/>
    </source>
</evidence>
<organism>
    <name type="scientific">Escherichia coli (strain UTI89 / UPEC)</name>
    <dbReference type="NCBI Taxonomy" id="364106"/>
    <lineage>
        <taxon>Bacteria</taxon>
        <taxon>Pseudomonadati</taxon>
        <taxon>Pseudomonadota</taxon>
        <taxon>Gammaproteobacteria</taxon>
        <taxon>Enterobacterales</taxon>
        <taxon>Enterobacteriaceae</taxon>
        <taxon>Escherichia</taxon>
    </lineage>
</organism>
<accession>Q1RGH3</accession>
<proteinExistence type="inferred from homology"/>
<gene>
    <name evidence="1" type="primary">ispH</name>
    <name type="ordered locus">UTI89_C0031</name>
</gene>
<keyword id="KW-0004">4Fe-4S</keyword>
<keyword id="KW-0408">Iron</keyword>
<keyword id="KW-0411">Iron-sulfur</keyword>
<keyword id="KW-0414">Isoprene biosynthesis</keyword>
<keyword id="KW-0479">Metal-binding</keyword>
<keyword id="KW-0560">Oxidoreductase</keyword>
<protein>
    <recommendedName>
        <fullName evidence="1">4-hydroxy-3-methylbut-2-enyl diphosphate reductase</fullName>
        <shortName evidence="1">HMBPP reductase</shortName>
        <ecNumber evidence="1">1.17.7.4</ecNumber>
    </recommendedName>
</protein>
<name>ISPH_ECOUT</name>
<feature type="chain" id="PRO_1000021118" description="4-hydroxy-3-methylbut-2-enyl diphosphate reductase">
    <location>
        <begin position="1"/>
        <end position="316"/>
    </location>
</feature>
<feature type="active site" description="Proton donor" evidence="1">
    <location>
        <position position="126"/>
    </location>
</feature>
<feature type="binding site" evidence="1">
    <location>
        <position position="12"/>
    </location>
    <ligand>
        <name>[4Fe-4S] cluster</name>
        <dbReference type="ChEBI" id="CHEBI:49883"/>
    </ligand>
</feature>
<feature type="binding site" evidence="1">
    <location>
        <position position="41"/>
    </location>
    <ligand>
        <name>(2E)-4-hydroxy-3-methylbut-2-enyl diphosphate</name>
        <dbReference type="ChEBI" id="CHEBI:128753"/>
    </ligand>
</feature>
<feature type="binding site" evidence="1">
    <location>
        <position position="41"/>
    </location>
    <ligand>
        <name>dimethylallyl diphosphate</name>
        <dbReference type="ChEBI" id="CHEBI:57623"/>
    </ligand>
</feature>
<feature type="binding site" evidence="1">
    <location>
        <position position="41"/>
    </location>
    <ligand>
        <name>isopentenyl diphosphate</name>
        <dbReference type="ChEBI" id="CHEBI:128769"/>
    </ligand>
</feature>
<feature type="binding site" evidence="1">
    <location>
        <position position="74"/>
    </location>
    <ligand>
        <name>(2E)-4-hydroxy-3-methylbut-2-enyl diphosphate</name>
        <dbReference type="ChEBI" id="CHEBI:128753"/>
    </ligand>
</feature>
<feature type="binding site" evidence="1">
    <location>
        <position position="74"/>
    </location>
    <ligand>
        <name>dimethylallyl diphosphate</name>
        <dbReference type="ChEBI" id="CHEBI:57623"/>
    </ligand>
</feature>
<feature type="binding site" evidence="1">
    <location>
        <position position="74"/>
    </location>
    <ligand>
        <name>isopentenyl diphosphate</name>
        <dbReference type="ChEBI" id="CHEBI:128769"/>
    </ligand>
</feature>
<feature type="binding site" evidence="1">
    <location>
        <position position="96"/>
    </location>
    <ligand>
        <name>[4Fe-4S] cluster</name>
        <dbReference type="ChEBI" id="CHEBI:49883"/>
    </ligand>
</feature>
<feature type="binding site" evidence="1">
    <location>
        <position position="124"/>
    </location>
    <ligand>
        <name>(2E)-4-hydroxy-3-methylbut-2-enyl diphosphate</name>
        <dbReference type="ChEBI" id="CHEBI:128753"/>
    </ligand>
</feature>
<feature type="binding site" evidence="1">
    <location>
        <position position="124"/>
    </location>
    <ligand>
        <name>dimethylallyl diphosphate</name>
        <dbReference type="ChEBI" id="CHEBI:57623"/>
    </ligand>
</feature>
<feature type="binding site" evidence="1">
    <location>
        <position position="124"/>
    </location>
    <ligand>
        <name>isopentenyl diphosphate</name>
        <dbReference type="ChEBI" id="CHEBI:128769"/>
    </ligand>
</feature>
<feature type="binding site" evidence="1">
    <location>
        <position position="167"/>
    </location>
    <ligand>
        <name>(2E)-4-hydroxy-3-methylbut-2-enyl diphosphate</name>
        <dbReference type="ChEBI" id="CHEBI:128753"/>
    </ligand>
</feature>
<feature type="binding site" evidence="1">
    <location>
        <position position="197"/>
    </location>
    <ligand>
        <name>[4Fe-4S] cluster</name>
        <dbReference type="ChEBI" id="CHEBI:49883"/>
    </ligand>
</feature>
<feature type="binding site" evidence="1">
    <location>
        <position position="225"/>
    </location>
    <ligand>
        <name>(2E)-4-hydroxy-3-methylbut-2-enyl diphosphate</name>
        <dbReference type="ChEBI" id="CHEBI:128753"/>
    </ligand>
</feature>
<feature type="binding site" evidence="1">
    <location>
        <position position="225"/>
    </location>
    <ligand>
        <name>dimethylallyl diphosphate</name>
        <dbReference type="ChEBI" id="CHEBI:57623"/>
    </ligand>
</feature>
<feature type="binding site" evidence="1">
    <location>
        <position position="225"/>
    </location>
    <ligand>
        <name>isopentenyl diphosphate</name>
        <dbReference type="ChEBI" id="CHEBI:128769"/>
    </ligand>
</feature>
<feature type="binding site" evidence="1">
    <location>
        <position position="226"/>
    </location>
    <ligand>
        <name>(2E)-4-hydroxy-3-methylbut-2-enyl diphosphate</name>
        <dbReference type="ChEBI" id="CHEBI:128753"/>
    </ligand>
</feature>
<feature type="binding site" evidence="1">
    <location>
        <position position="226"/>
    </location>
    <ligand>
        <name>dimethylallyl diphosphate</name>
        <dbReference type="ChEBI" id="CHEBI:57623"/>
    </ligand>
</feature>
<feature type="binding site" evidence="1">
    <location>
        <position position="226"/>
    </location>
    <ligand>
        <name>isopentenyl diphosphate</name>
        <dbReference type="ChEBI" id="CHEBI:128769"/>
    </ligand>
</feature>
<feature type="binding site" evidence="1">
    <location>
        <position position="227"/>
    </location>
    <ligand>
        <name>(2E)-4-hydroxy-3-methylbut-2-enyl diphosphate</name>
        <dbReference type="ChEBI" id="CHEBI:128753"/>
    </ligand>
</feature>
<feature type="binding site" evidence="1">
    <location>
        <position position="227"/>
    </location>
    <ligand>
        <name>dimethylallyl diphosphate</name>
        <dbReference type="ChEBI" id="CHEBI:57623"/>
    </ligand>
</feature>
<feature type="binding site" evidence="1">
    <location>
        <position position="227"/>
    </location>
    <ligand>
        <name>isopentenyl diphosphate</name>
        <dbReference type="ChEBI" id="CHEBI:128769"/>
    </ligand>
</feature>
<feature type="binding site" evidence="1">
    <location>
        <position position="269"/>
    </location>
    <ligand>
        <name>(2E)-4-hydroxy-3-methylbut-2-enyl diphosphate</name>
        <dbReference type="ChEBI" id="CHEBI:128753"/>
    </ligand>
</feature>
<feature type="binding site" evidence="1">
    <location>
        <position position="269"/>
    </location>
    <ligand>
        <name>dimethylallyl diphosphate</name>
        <dbReference type="ChEBI" id="CHEBI:57623"/>
    </ligand>
</feature>
<feature type="binding site" evidence="1">
    <location>
        <position position="269"/>
    </location>
    <ligand>
        <name>isopentenyl diphosphate</name>
        <dbReference type="ChEBI" id="CHEBI:128769"/>
    </ligand>
</feature>
<dbReference type="EC" id="1.17.7.4" evidence="1"/>
<dbReference type="EMBL" id="CP000243">
    <property type="protein sequence ID" value="ABE05541.1"/>
    <property type="molecule type" value="Genomic_DNA"/>
</dbReference>
<dbReference type="RefSeq" id="WP_001166403.1">
    <property type="nucleotide sequence ID" value="NZ_CP064825.1"/>
</dbReference>
<dbReference type="SMR" id="Q1RGH3"/>
<dbReference type="KEGG" id="eci:UTI89_C0031"/>
<dbReference type="HOGENOM" id="CLU_027486_1_0_6"/>
<dbReference type="UniPathway" id="UPA00056">
    <property type="reaction ID" value="UER00097"/>
</dbReference>
<dbReference type="UniPathway" id="UPA00059">
    <property type="reaction ID" value="UER00105"/>
</dbReference>
<dbReference type="Proteomes" id="UP000001952">
    <property type="component" value="Chromosome"/>
</dbReference>
<dbReference type="GO" id="GO:0051539">
    <property type="term" value="F:4 iron, 4 sulfur cluster binding"/>
    <property type="evidence" value="ECO:0007669"/>
    <property type="project" value="UniProtKB-UniRule"/>
</dbReference>
<dbReference type="GO" id="GO:0051745">
    <property type="term" value="F:4-hydroxy-3-methylbut-2-enyl diphosphate reductase activity"/>
    <property type="evidence" value="ECO:0007669"/>
    <property type="project" value="UniProtKB-UniRule"/>
</dbReference>
<dbReference type="GO" id="GO:0046872">
    <property type="term" value="F:metal ion binding"/>
    <property type="evidence" value="ECO:0007669"/>
    <property type="project" value="UniProtKB-KW"/>
</dbReference>
<dbReference type="GO" id="GO:0050992">
    <property type="term" value="P:dimethylallyl diphosphate biosynthetic process"/>
    <property type="evidence" value="ECO:0007669"/>
    <property type="project" value="UniProtKB-UniRule"/>
</dbReference>
<dbReference type="GO" id="GO:0019288">
    <property type="term" value="P:isopentenyl diphosphate biosynthetic process, methylerythritol 4-phosphate pathway"/>
    <property type="evidence" value="ECO:0007669"/>
    <property type="project" value="UniProtKB-UniRule"/>
</dbReference>
<dbReference type="GO" id="GO:0016114">
    <property type="term" value="P:terpenoid biosynthetic process"/>
    <property type="evidence" value="ECO:0007669"/>
    <property type="project" value="UniProtKB-UniRule"/>
</dbReference>
<dbReference type="CDD" id="cd13944">
    <property type="entry name" value="lytB_ispH"/>
    <property type="match status" value="1"/>
</dbReference>
<dbReference type="FunFam" id="3.40.1010.20:FF:000001">
    <property type="entry name" value="4-hydroxy-3-methylbut-2-enyl diphosphate reductase"/>
    <property type="match status" value="1"/>
</dbReference>
<dbReference type="FunFam" id="3.40.50.11270:FF:000001">
    <property type="entry name" value="4-hydroxy-3-methylbut-2-enyl diphosphate reductase"/>
    <property type="match status" value="1"/>
</dbReference>
<dbReference type="Gene3D" id="3.40.50.11270">
    <property type="match status" value="1"/>
</dbReference>
<dbReference type="Gene3D" id="3.40.1010.20">
    <property type="entry name" value="4-hydroxy-3-methylbut-2-enyl diphosphate reductase, catalytic domain"/>
    <property type="match status" value="2"/>
</dbReference>
<dbReference type="HAMAP" id="MF_00191">
    <property type="entry name" value="IspH"/>
    <property type="match status" value="1"/>
</dbReference>
<dbReference type="InterPro" id="IPR003451">
    <property type="entry name" value="LytB/IspH"/>
</dbReference>
<dbReference type="NCBIfam" id="TIGR00216">
    <property type="entry name" value="ispH_lytB"/>
    <property type="match status" value="1"/>
</dbReference>
<dbReference type="NCBIfam" id="NF002188">
    <property type="entry name" value="PRK01045.1-2"/>
    <property type="match status" value="1"/>
</dbReference>
<dbReference type="NCBIfam" id="NF002190">
    <property type="entry name" value="PRK01045.1-4"/>
    <property type="match status" value="1"/>
</dbReference>
<dbReference type="PANTHER" id="PTHR30426">
    <property type="entry name" value="4-HYDROXY-3-METHYLBUT-2-ENYL DIPHOSPHATE REDUCTASE"/>
    <property type="match status" value="1"/>
</dbReference>
<dbReference type="PANTHER" id="PTHR30426:SF0">
    <property type="entry name" value="4-HYDROXY-3-METHYLBUT-2-ENYL DIPHOSPHATE REDUCTASE"/>
    <property type="match status" value="1"/>
</dbReference>
<dbReference type="Pfam" id="PF02401">
    <property type="entry name" value="LYTB"/>
    <property type="match status" value="1"/>
</dbReference>
<reference key="1">
    <citation type="journal article" date="2006" name="Proc. Natl. Acad. Sci. U.S.A.">
        <title>Identification of genes subject to positive selection in uropathogenic strains of Escherichia coli: a comparative genomics approach.</title>
        <authorList>
            <person name="Chen S.L."/>
            <person name="Hung C.-S."/>
            <person name="Xu J."/>
            <person name="Reigstad C.S."/>
            <person name="Magrini V."/>
            <person name="Sabo A."/>
            <person name="Blasiar D."/>
            <person name="Bieri T."/>
            <person name="Meyer R.R."/>
            <person name="Ozersky P."/>
            <person name="Armstrong J.R."/>
            <person name="Fulton R.S."/>
            <person name="Latreille J.P."/>
            <person name="Spieth J."/>
            <person name="Hooton T.M."/>
            <person name="Mardis E.R."/>
            <person name="Hultgren S.J."/>
            <person name="Gordon J.I."/>
        </authorList>
    </citation>
    <scope>NUCLEOTIDE SEQUENCE [LARGE SCALE GENOMIC DNA]</scope>
    <source>
        <strain>UTI89 / UPEC</strain>
    </source>
</reference>